<comment type="function">
    <text evidence="1">Blocks the elongation and depolymerization of the actin filaments at the pointed end. The Tmod/TM complex contributes to the formation of the short actin protofilament, which in turn defines the geometry of the membrane skeleton (By similarity).</text>
</comment>
<comment type="subunit">
    <text evidence="3">Binds to the N-terminus of tropomyosin and to actin. Interacts with FLII.</text>
</comment>
<comment type="subcellular location">
    <subcellularLocation>
        <location evidence="2">Cytoplasm</location>
        <location evidence="2">Cytoskeleton</location>
    </subcellularLocation>
    <text evidence="2">In myofibrils with sarcomeric structure, localizes to the pointed end of actin thin filaments.</text>
</comment>
<comment type="tissue specificity">
    <text>Highly expressed in the erythrocyte, heart and skeletal muscle.</text>
</comment>
<comment type="similarity">
    <text evidence="6">Belongs to the tropomodulin family.</text>
</comment>
<accession>P49813</accession>
<accession>Q3KP84</accession>
<accession>Q9ERR9</accession>
<protein>
    <recommendedName>
        <fullName>Tropomodulin-1</fullName>
    </recommendedName>
    <alternativeName>
        <fullName>Erythrocyte tropomodulin</fullName>
        <shortName>E-Tmod</shortName>
    </alternativeName>
</protein>
<evidence type="ECO:0000250" key="1"/>
<evidence type="ECO:0000250" key="2">
    <source>
        <dbReference type="UniProtKB" id="P28289"/>
    </source>
</evidence>
<evidence type="ECO:0000250" key="3">
    <source>
        <dbReference type="UniProtKB" id="P70567"/>
    </source>
</evidence>
<evidence type="ECO:0000255" key="4"/>
<evidence type="ECO:0000256" key="5">
    <source>
        <dbReference type="SAM" id="MobiDB-lite"/>
    </source>
</evidence>
<evidence type="ECO:0000305" key="6"/>
<gene>
    <name type="primary">Tmod1</name>
    <name type="synonym">Tmod</name>
</gene>
<feature type="chain" id="PRO_0000186129" description="Tropomodulin-1">
    <location>
        <begin position="1"/>
        <end position="359"/>
    </location>
</feature>
<feature type="region of interest" description="Disordered" evidence="5">
    <location>
        <begin position="36"/>
        <end position="61"/>
    </location>
</feature>
<feature type="region of interest" description="Tropomyosin-binding" evidence="4">
    <location>
        <begin position="39"/>
        <end position="138"/>
    </location>
</feature>
<feature type="sequence conflict" description="In Ref. 1; AAB33388." evidence="6" ref="1">
    <original>I</original>
    <variation>M</variation>
    <location>
        <position position="352"/>
    </location>
</feature>
<dbReference type="EMBL" id="S76831">
    <property type="protein sequence ID" value="AAB33388.1"/>
    <property type="molecule type" value="mRNA"/>
</dbReference>
<dbReference type="EMBL" id="AF287746">
    <property type="protein sequence ID" value="AAF91487.1"/>
    <property type="molecule type" value="Genomic_DNA"/>
</dbReference>
<dbReference type="EMBL" id="AF287738">
    <property type="protein sequence ID" value="AAF91487.1"/>
    <property type="status" value="JOINED"/>
    <property type="molecule type" value="Genomic_DNA"/>
</dbReference>
<dbReference type="EMBL" id="AF287739">
    <property type="protein sequence ID" value="AAF91487.1"/>
    <property type="status" value="JOINED"/>
    <property type="molecule type" value="Genomic_DNA"/>
</dbReference>
<dbReference type="EMBL" id="AF287740">
    <property type="protein sequence ID" value="AAF91487.1"/>
    <property type="status" value="JOINED"/>
    <property type="molecule type" value="Genomic_DNA"/>
</dbReference>
<dbReference type="EMBL" id="AF287741">
    <property type="protein sequence ID" value="AAF91487.1"/>
    <property type="status" value="JOINED"/>
    <property type="molecule type" value="Genomic_DNA"/>
</dbReference>
<dbReference type="EMBL" id="AF287742">
    <property type="protein sequence ID" value="AAF91487.1"/>
    <property type="status" value="JOINED"/>
    <property type="molecule type" value="Genomic_DNA"/>
</dbReference>
<dbReference type="EMBL" id="AF287743">
    <property type="protein sequence ID" value="AAF91487.1"/>
    <property type="status" value="JOINED"/>
    <property type="molecule type" value="Genomic_DNA"/>
</dbReference>
<dbReference type="EMBL" id="AF287744">
    <property type="protein sequence ID" value="AAF91487.1"/>
    <property type="status" value="JOINED"/>
    <property type="molecule type" value="Genomic_DNA"/>
</dbReference>
<dbReference type="EMBL" id="AF287745">
    <property type="protein sequence ID" value="AAF91487.1"/>
    <property type="status" value="JOINED"/>
    <property type="molecule type" value="Genomic_DNA"/>
</dbReference>
<dbReference type="EMBL" id="AL732615">
    <property type="status" value="NOT_ANNOTATED_CDS"/>
    <property type="molecule type" value="Genomic_DNA"/>
</dbReference>
<dbReference type="EMBL" id="CH466565">
    <property type="protein sequence ID" value="EDL02383.1"/>
    <property type="molecule type" value="Genomic_DNA"/>
</dbReference>
<dbReference type="EMBL" id="BC106849">
    <property type="protein sequence ID" value="AAI06850.1"/>
    <property type="molecule type" value="mRNA"/>
</dbReference>
<dbReference type="EMBL" id="BC106850">
    <property type="protein sequence ID" value="AAI06851.1"/>
    <property type="molecule type" value="mRNA"/>
</dbReference>
<dbReference type="CCDS" id="CCDS18143.1"/>
<dbReference type="RefSeq" id="NP_068683.1">
    <property type="nucleotide sequence ID" value="NM_021883.3"/>
</dbReference>
<dbReference type="SMR" id="P49813"/>
<dbReference type="BioGRID" id="204233">
    <property type="interactions" value="14"/>
</dbReference>
<dbReference type="FunCoup" id="P49813">
    <property type="interactions" value="939"/>
</dbReference>
<dbReference type="IntAct" id="P49813">
    <property type="interactions" value="2"/>
</dbReference>
<dbReference type="MINT" id="P49813"/>
<dbReference type="STRING" id="10090.ENSMUSP00000103402"/>
<dbReference type="iPTMnet" id="P49813"/>
<dbReference type="PhosphoSitePlus" id="P49813"/>
<dbReference type="jPOST" id="P49813"/>
<dbReference type="PaxDb" id="10090-ENSMUSP00000103402"/>
<dbReference type="PeptideAtlas" id="P49813"/>
<dbReference type="ProteomicsDB" id="259266"/>
<dbReference type="TopDownProteomics" id="P49813"/>
<dbReference type="Antibodypedia" id="28841">
    <property type="antibodies" value="303 antibodies from 28 providers"/>
</dbReference>
<dbReference type="DNASU" id="21916"/>
<dbReference type="Ensembl" id="ENSMUST00000107773.3">
    <property type="protein sequence ID" value="ENSMUSP00000103402.3"/>
    <property type="gene ID" value="ENSMUSG00000028328.14"/>
</dbReference>
<dbReference type="GeneID" id="21916"/>
<dbReference type="KEGG" id="mmu:21916"/>
<dbReference type="UCSC" id="uc008ste.1">
    <property type="organism name" value="mouse"/>
</dbReference>
<dbReference type="AGR" id="MGI:98775"/>
<dbReference type="CTD" id="7111"/>
<dbReference type="MGI" id="MGI:98775">
    <property type="gene designation" value="Tmod1"/>
</dbReference>
<dbReference type="VEuPathDB" id="HostDB:ENSMUSG00000028328"/>
<dbReference type="eggNOG" id="KOG3735">
    <property type="taxonomic scope" value="Eukaryota"/>
</dbReference>
<dbReference type="GeneTree" id="ENSGT00940000158695"/>
<dbReference type="HOGENOM" id="CLU_031052_0_0_1"/>
<dbReference type="InParanoid" id="P49813"/>
<dbReference type="OMA" id="PYQRDKL"/>
<dbReference type="OrthoDB" id="2163268at2759"/>
<dbReference type="PhylomeDB" id="P49813"/>
<dbReference type="TreeFam" id="TF315841"/>
<dbReference type="Reactome" id="R-MMU-390522">
    <property type="pathway name" value="Striated Muscle Contraction"/>
</dbReference>
<dbReference type="BioGRID-ORCS" id="21916">
    <property type="hits" value="3 hits in 77 CRISPR screens"/>
</dbReference>
<dbReference type="CD-CODE" id="CE726F99">
    <property type="entry name" value="Postsynaptic density"/>
</dbReference>
<dbReference type="PRO" id="PR:P49813"/>
<dbReference type="Proteomes" id="UP000000589">
    <property type="component" value="Chromosome 4"/>
</dbReference>
<dbReference type="RNAct" id="P49813">
    <property type="molecule type" value="protein"/>
</dbReference>
<dbReference type="Bgee" id="ENSMUSG00000028328">
    <property type="expression patterns" value="Expressed in quadriceps femoris and 245 other cell types or tissues"/>
</dbReference>
<dbReference type="ExpressionAtlas" id="P49813">
    <property type="expression patterns" value="baseline and differential"/>
</dbReference>
<dbReference type="GO" id="GO:0005884">
    <property type="term" value="C:actin filament"/>
    <property type="evidence" value="ECO:0000250"/>
    <property type="project" value="UniProtKB"/>
</dbReference>
<dbReference type="GO" id="GO:0008180">
    <property type="term" value="C:COP9 signalosome"/>
    <property type="evidence" value="ECO:0007669"/>
    <property type="project" value="Ensembl"/>
</dbReference>
<dbReference type="GO" id="GO:0030863">
    <property type="term" value="C:cortical cytoskeleton"/>
    <property type="evidence" value="ECO:0000314"/>
    <property type="project" value="MGI"/>
</dbReference>
<dbReference type="GO" id="GO:0005856">
    <property type="term" value="C:cytoskeleton"/>
    <property type="evidence" value="ECO:0000304"/>
    <property type="project" value="MGI"/>
</dbReference>
<dbReference type="GO" id="GO:0016020">
    <property type="term" value="C:membrane"/>
    <property type="evidence" value="ECO:0000314"/>
    <property type="project" value="MGI"/>
</dbReference>
<dbReference type="GO" id="GO:0030016">
    <property type="term" value="C:myofibril"/>
    <property type="evidence" value="ECO:0000314"/>
    <property type="project" value="MGI"/>
</dbReference>
<dbReference type="GO" id="GO:0030017">
    <property type="term" value="C:sarcomere"/>
    <property type="evidence" value="ECO:0000314"/>
    <property type="project" value="MGI"/>
</dbReference>
<dbReference type="GO" id="GO:0005865">
    <property type="term" value="C:striated muscle thin filament"/>
    <property type="evidence" value="ECO:0007669"/>
    <property type="project" value="Ensembl"/>
</dbReference>
<dbReference type="GO" id="GO:0003779">
    <property type="term" value="F:actin binding"/>
    <property type="evidence" value="ECO:0000250"/>
    <property type="project" value="UniProtKB"/>
</dbReference>
<dbReference type="GO" id="GO:0005523">
    <property type="term" value="F:tropomyosin binding"/>
    <property type="evidence" value="ECO:0000314"/>
    <property type="project" value="MGI"/>
</dbReference>
<dbReference type="GO" id="GO:0008344">
    <property type="term" value="P:adult locomotory behavior"/>
    <property type="evidence" value="ECO:0000315"/>
    <property type="project" value="MGI"/>
</dbReference>
<dbReference type="GO" id="GO:0070307">
    <property type="term" value="P:lens fiber cell development"/>
    <property type="evidence" value="ECO:0000316"/>
    <property type="project" value="CACAO"/>
</dbReference>
<dbReference type="GO" id="GO:0006936">
    <property type="term" value="P:muscle contraction"/>
    <property type="evidence" value="ECO:0000315"/>
    <property type="project" value="MGI"/>
</dbReference>
<dbReference type="GO" id="GO:0030239">
    <property type="term" value="P:myofibril assembly"/>
    <property type="evidence" value="ECO:0000315"/>
    <property type="project" value="MGI"/>
</dbReference>
<dbReference type="GO" id="GO:0051694">
    <property type="term" value="P:pointed-end actin filament capping"/>
    <property type="evidence" value="ECO:0007669"/>
    <property type="project" value="InterPro"/>
</dbReference>
<dbReference type="FunFam" id="3.80.10.10:FF:000006">
    <property type="entry name" value="Tropomodulin 2"/>
    <property type="match status" value="1"/>
</dbReference>
<dbReference type="Gene3D" id="3.80.10.10">
    <property type="entry name" value="Ribonuclease Inhibitor"/>
    <property type="match status" value="1"/>
</dbReference>
<dbReference type="InterPro" id="IPR032675">
    <property type="entry name" value="LRR_dom_sf"/>
</dbReference>
<dbReference type="InterPro" id="IPR004934">
    <property type="entry name" value="TMOD"/>
</dbReference>
<dbReference type="PANTHER" id="PTHR10901">
    <property type="entry name" value="TROPOMODULIN"/>
    <property type="match status" value="1"/>
</dbReference>
<dbReference type="PANTHER" id="PTHR10901:SF8">
    <property type="entry name" value="TROPOMODULIN-1"/>
    <property type="match status" value="1"/>
</dbReference>
<dbReference type="Pfam" id="PF03250">
    <property type="entry name" value="Tropomodulin"/>
    <property type="match status" value="1"/>
</dbReference>
<dbReference type="SUPFAM" id="SSF52047">
    <property type="entry name" value="RNI-like"/>
    <property type="match status" value="1"/>
</dbReference>
<keyword id="KW-0009">Actin-binding</keyword>
<keyword id="KW-0963">Cytoplasm</keyword>
<keyword id="KW-0206">Cytoskeleton</keyword>
<keyword id="KW-1185">Reference proteome</keyword>
<organism>
    <name type="scientific">Mus musculus</name>
    <name type="common">Mouse</name>
    <dbReference type="NCBI Taxonomy" id="10090"/>
    <lineage>
        <taxon>Eukaryota</taxon>
        <taxon>Metazoa</taxon>
        <taxon>Chordata</taxon>
        <taxon>Craniata</taxon>
        <taxon>Vertebrata</taxon>
        <taxon>Euteleostomi</taxon>
        <taxon>Mammalia</taxon>
        <taxon>Eutheria</taxon>
        <taxon>Euarchontoglires</taxon>
        <taxon>Glires</taxon>
        <taxon>Rodentia</taxon>
        <taxon>Myomorpha</taxon>
        <taxon>Muroidea</taxon>
        <taxon>Muridae</taxon>
        <taxon>Murinae</taxon>
        <taxon>Mus</taxon>
        <taxon>Mus</taxon>
    </lineage>
</organism>
<proteinExistence type="evidence at protein level"/>
<name>TMOD1_MOUSE</name>
<reference key="1">
    <citation type="journal article" date="1995" name="Dev. Biol.">
        <title>Cloning of tropomodulin cDNA and localization of gene transcripts during mouse embryogenesis.</title>
        <authorList>
            <person name="Ito M."/>
            <person name="Swanson B."/>
            <person name="Sussman M.A."/>
            <person name="Kedes L."/>
            <person name="Lyons G."/>
        </authorList>
    </citation>
    <scope>NUCLEOTIDE SEQUENCE [MRNA]</scope>
</reference>
<reference key="2">
    <citation type="journal article" date="2000" name="Gene">
        <title>Genomic organization of mouse and human erythrocyte tropomodulin genes encoding the pointed end capping protein for the actin filaments.</title>
        <authorList>
            <person name="Chu X."/>
            <person name="Thompson D."/>
            <person name="Yee L.J."/>
            <person name="Sung L.A."/>
        </authorList>
    </citation>
    <scope>NUCLEOTIDE SEQUENCE [GENOMIC DNA]</scope>
</reference>
<reference key="3">
    <citation type="journal article" date="2009" name="PLoS Biol.">
        <title>Lineage-specific biology revealed by a finished genome assembly of the mouse.</title>
        <authorList>
            <person name="Church D.M."/>
            <person name="Goodstadt L."/>
            <person name="Hillier L.W."/>
            <person name="Zody M.C."/>
            <person name="Goldstein S."/>
            <person name="She X."/>
            <person name="Bult C.J."/>
            <person name="Agarwala R."/>
            <person name="Cherry J.L."/>
            <person name="DiCuccio M."/>
            <person name="Hlavina W."/>
            <person name="Kapustin Y."/>
            <person name="Meric P."/>
            <person name="Maglott D."/>
            <person name="Birtle Z."/>
            <person name="Marques A.C."/>
            <person name="Graves T."/>
            <person name="Zhou S."/>
            <person name="Teague B."/>
            <person name="Potamousis K."/>
            <person name="Churas C."/>
            <person name="Place M."/>
            <person name="Herschleb J."/>
            <person name="Runnheim R."/>
            <person name="Forrest D."/>
            <person name="Amos-Landgraf J."/>
            <person name="Schwartz D.C."/>
            <person name="Cheng Z."/>
            <person name="Lindblad-Toh K."/>
            <person name="Eichler E.E."/>
            <person name="Ponting C.P."/>
        </authorList>
    </citation>
    <scope>NUCLEOTIDE SEQUENCE [LARGE SCALE GENOMIC DNA]</scope>
    <source>
        <strain>C57BL/6J</strain>
    </source>
</reference>
<reference key="4">
    <citation type="submission" date="2005-09" db="EMBL/GenBank/DDBJ databases">
        <authorList>
            <person name="Mural R.J."/>
            <person name="Adams M.D."/>
            <person name="Myers E.W."/>
            <person name="Smith H.O."/>
            <person name="Venter J.C."/>
        </authorList>
    </citation>
    <scope>NUCLEOTIDE SEQUENCE [LARGE SCALE GENOMIC DNA]</scope>
</reference>
<reference key="5">
    <citation type="journal article" date="2004" name="Genome Res.">
        <title>The status, quality, and expansion of the NIH full-length cDNA project: the Mammalian Gene Collection (MGC).</title>
        <authorList>
            <consortium name="The MGC Project Team"/>
        </authorList>
    </citation>
    <scope>NUCLEOTIDE SEQUENCE [LARGE SCALE MRNA]</scope>
</reference>
<reference key="6">
    <citation type="journal article" date="2010" name="Cell">
        <title>A tissue-specific atlas of mouse protein phosphorylation and expression.</title>
        <authorList>
            <person name="Huttlin E.L."/>
            <person name="Jedrychowski M.P."/>
            <person name="Elias J.E."/>
            <person name="Goswami T."/>
            <person name="Rad R."/>
            <person name="Beausoleil S.A."/>
            <person name="Villen J."/>
            <person name="Haas W."/>
            <person name="Sowa M.E."/>
            <person name="Gygi S.P."/>
        </authorList>
    </citation>
    <scope>IDENTIFICATION BY MASS SPECTROMETRY [LARGE SCALE ANALYSIS]</scope>
    <source>
        <tissue>Spleen</tissue>
    </source>
</reference>
<sequence length="359" mass="40466">MSYRRELEKYRDLDEDEILGALTEEELRTLENELDELDPDNALLPAGLRQKDQTTKAPTGPFKREELLDHLEKQAKEFKDREDLVPYTGEKRGKVWVPKQKPMDPVLESVTLEPELEEALANASDAELCDIAAILGMHTLMSNQQYYQALGSSSIVNKEGLNSVIKPTQYKPVPDEEPNSTDVEETLERIKNNDPELEEVNLNNIRNIPIPTLKAYAEALKENSYVKKFSIVGTRSNDPVAFALAEMLKVNKVLKTLNVESNFISGAGILRLVEALPHNTSLVELKIDNQSQPLGNKVEMEIVNMLEKNTTLLKFGYHFTQQGPRLRASNAMMSNNDLVRKRRLADLTGPIIPKCRSGV</sequence>